<name>Y056_ABVP</name>
<feature type="chain" id="PRO_0000384826" description="Uncharacterized protein ORF56">
    <location>
        <begin position="1"/>
        <end position="56"/>
    </location>
</feature>
<proteinExistence type="predicted"/>
<dbReference type="EMBL" id="EF432053">
    <property type="protein sequence ID" value="ABP73403.1"/>
    <property type="molecule type" value="Genomic_DNA"/>
</dbReference>
<dbReference type="RefSeq" id="YP_001210317.1">
    <property type="nucleotide sequence ID" value="NC_009452.1"/>
</dbReference>
<dbReference type="SMR" id="A4ZU99"/>
<dbReference type="GeneID" id="5129847"/>
<dbReference type="KEGG" id="vg:5129847"/>
<dbReference type="Proteomes" id="UP000000513">
    <property type="component" value="Segment"/>
</dbReference>
<organismHost>
    <name type="scientific">Acidianus convivator</name>
    <dbReference type="NCBI Taxonomy" id="269667"/>
</organismHost>
<accession>A4ZU99</accession>
<protein>
    <recommendedName>
        <fullName>Uncharacterized protein ORF56</fullName>
    </recommendedName>
</protein>
<sequence>MRDECYQVYLELKKILDKAMECLNDEDFQLLLVTMIAKATLTKVEKNDLQRRIPNK</sequence>
<organism>
    <name type="scientific">Acidianus bottle-shaped virus (isolate Italy/Pozzuoli)</name>
    <name type="common">ABV</name>
    <dbReference type="NCBI Taxonomy" id="654911"/>
    <lineage>
        <taxon>Viruses</taxon>
        <taxon>Viruses incertae sedis</taxon>
        <taxon>Ampullaviridae</taxon>
        <taxon>Bottigliavirus</taxon>
        <taxon>Bottigliavirus ABV</taxon>
    </lineage>
</organism>
<reference key="1">
    <citation type="journal article" date="2007" name="Virology">
        <title>Genome of the Acidianus bottle-shaped virus and insights into the replication and packaging mechanisms.</title>
        <authorList>
            <person name="Peng X."/>
            <person name="Basta T."/>
            <person name="Haring M."/>
            <person name="Garrett R.A."/>
            <person name="Prangishvili D."/>
        </authorList>
    </citation>
    <scope>NUCLEOTIDE SEQUENCE [GENOMIC DNA]</scope>
</reference>
<gene>
    <name type="ORF">ORF56</name>
</gene>
<keyword id="KW-1185">Reference proteome</keyword>